<sequence>MHILKKPDFSDPKLRAKLAKGMGHNYYGEPAWPNDLLYIFPVVILGTFACLVGLAVLDPAMLGDKADPFATPLEILPEWYLYPVFQILRVVPNKLLGIALQTLVPLGLMLIPFIESVNKYQNPFRRPIAMAFFLFGTVITIYLGIGACLPIDKSLTLGLF</sequence>
<feature type="chain" id="PRO_0000061905" description="Cytochrome b6-f complex subunit 4">
    <location>
        <begin position="1"/>
        <end position="160"/>
    </location>
</feature>
<feature type="transmembrane region" description="Helical" evidence="1">
    <location>
        <begin position="36"/>
        <end position="56"/>
    </location>
</feature>
<feature type="transmembrane region" description="Helical" evidence="1">
    <location>
        <begin position="95"/>
        <end position="115"/>
    </location>
</feature>
<feature type="transmembrane region" description="Helical" evidence="1">
    <location>
        <begin position="128"/>
        <end position="148"/>
    </location>
</feature>
<gene>
    <name evidence="1" type="primary">petD</name>
    <name type="ordered locus">PMT_1648</name>
</gene>
<name>PETD_PROMM</name>
<comment type="function">
    <text evidence="1">Component of the cytochrome b6-f complex, which mediates electron transfer between photosystem II (PSII) and photosystem I (PSI), cyclic electron flow around PSI, and state transitions.</text>
</comment>
<comment type="subunit">
    <text evidence="1">The 4 large subunits of the cytochrome b6-f complex are cytochrome b6, subunit IV (17 kDa polypeptide, PetD), cytochrome f and the Rieske protein, while the 4 small subunits are PetG, PetL, PetM and PetN. The complex functions as a dimer.</text>
</comment>
<comment type="subcellular location">
    <subcellularLocation>
        <location evidence="1">Cellular thylakoid membrane</location>
        <topology evidence="1">Multi-pass membrane protein</topology>
    </subcellularLocation>
</comment>
<comment type="similarity">
    <text evidence="1">Belongs to the cytochrome b family. PetD subfamily.</text>
</comment>
<organism>
    <name type="scientific">Prochlorococcus marinus (strain MIT 9313)</name>
    <dbReference type="NCBI Taxonomy" id="74547"/>
    <lineage>
        <taxon>Bacteria</taxon>
        <taxon>Bacillati</taxon>
        <taxon>Cyanobacteriota</taxon>
        <taxon>Cyanophyceae</taxon>
        <taxon>Synechococcales</taxon>
        <taxon>Prochlorococcaceae</taxon>
        <taxon>Prochlorococcus</taxon>
    </lineage>
</organism>
<keyword id="KW-0249">Electron transport</keyword>
<keyword id="KW-0472">Membrane</keyword>
<keyword id="KW-0602">Photosynthesis</keyword>
<keyword id="KW-1185">Reference proteome</keyword>
<keyword id="KW-0793">Thylakoid</keyword>
<keyword id="KW-0812">Transmembrane</keyword>
<keyword id="KW-1133">Transmembrane helix</keyword>
<keyword id="KW-0813">Transport</keyword>
<protein>
    <recommendedName>
        <fullName evidence="1">Cytochrome b6-f complex subunit 4</fullName>
    </recommendedName>
    <alternativeName>
        <fullName evidence="1">17 kDa polypeptide</fullName>
    </alternativeName>
</protein>
<dbReference type="EMBL" id="BX548175">
    <property type="protein sequence ID" value="CAE21823.1"/>
    <property type="molecule type" value="Genomic_DNA"/>
</dbReference>
<dbReference type="RefSeq" id="WP_011131015.1">
    <property type="nucleotide sequence ID" value="NC_005071.1"/>
</dbReference>
<dbReference type="SMR" id="Q7TUQ1"/>
<dbReference type="KEGG" id="pmt:PMT_1648"/>
<dbReference type="eggNOG" id="COG1290">
    <property type="taxonomic scope" value="Bacteria"/>
</dbReference>
<dbReference type="HOGENOM" id="CLU_112652_0_0_3"/>
<dbReference type="OrthoDB" id="529454at2"/>
<dbReference type="Proteomes" id="UP000001423">
    <property type="component" value="Chromosome"/>
</dbReference>
<dbReference type="GO" id="GO:0031676">
    <property type="term" value="C:plasma membrane-derived thylakoid membrane"/>
    <property type="evidence" value="ECO:0007669"/>
    <property type="project" value="UniProtKB-SubCell"/>
</dbReference>
<dbReference type="GO" id="GO:0045158">
    <property type="term" value="F:electron transporter, transferring electrons within cytochrome b6/f complex of photosystem II activity"/>
    <property type="evidence" value="ECO:0007669"/>
    <property type="project" value="UniProtKB-UniRule"/>
</dbReference>
<dbReference type="GO" id="GO:0045156">
    <property type="term" value="F:electron transporter, transferring electrons within the cyclic electron transport pathway of photosynthesis activity"/>
    <property type="evidence" value="ECO:0007669"/>
    <property type="project" value="InterPro"/>
</dbReference>
<dbReference type="GO" id="GO:0008121">
    <property type="term" value="F:ubiquinol-cytochrome-c reductase activity"/>
    <property type="evidence" value="ECO:0007669"/>
    <property type="project" value="TreeGrafter"/>
</dbReference>
<dbReference type="GO" id="GO:0009767">
    <property type="term" value="P:photosynthetic electron transport chain"/>
    <property type="evidence" value="ECO:0007669"/>
    <property type="project" value="InterPro"/>
</dbReference>
<dbReference type="CDD" id="cd00290">
    <property type="entry name" value="cytochrome_b_C"/>
    <property type="match status" value="1"/>
</dbReference>
<dbReference type="FunFam" id="1.10.287.980:FF:000001">
    <property type="entry name" value="Cytochrome b6-f complex subunit 4"/>
    <property type="match status" value="1"/>
</dbReference>
<dbReference type="FunFam" id="1.20.5.510:FF:000002">
    <property type="entry name" value="Cytochrome b6-f complex subunit 4"/>
    <property type="match status" value="1"/>
</dbReference>
<dbReference type="Gene3D" id="1.10.287.980">
    <property type="entry name" value="plastocyanin oxidoreductase"/>
    <property type="match status" value="1"/>
</dbReference>
<dbReference type="Gene3D" id="1.20.5.510">
    <property type="entry name" value="Single helix bin"/>
    <property type="match status" value="1"/>
</dbReference>
<dbReference type="HAMAP" id="MF_01344">
    <property type="entry name" value="Cytb6_f_subIV"/>
    <property type="match status" value="1"/>
</dbReference>
<dbReference type="InterPro" id="IPR005798">
    <property type="entry name" value="Cyt_b/b6_C"/>
</dbReference>
<dbReference type="InterPro" id="IPR036150">
    <property type="entry name" value="Cyt_b/b6_C_sf"/>
</dbReference>
<dbReference type="InterPro" id="IPR005870">
    <property type="entry name" value="Cyt_b6/f_cplx_suIV"/>
</dbReference>
<dbReference type="InterPro" id="IPR048260">
    <property type="entry name" value="Cytochrome_b_C_euk/bac"/>
</dbReference>
<dbReference type="NCBIfam" id="TIGR01156">
    <property type="entry name" value="cytb6_f_IV"/>
    <property type="match status" value="1"/>
</dbReference>
<dbReference type="PANTHER" id="PTHR19271">
    <property type="entry name" value="CYTOCHROME B"/>
    <property type="match status" value="1"/>
</dbReference>
<dbReference type="PANTHER" id="PTHR19271:SF41">
    <property type="entry name" value="CYTOCHROME B_B6 C-TERMINAL REGION PROFILE DOMAIN-CONTAINING PROTEIN"/>
    <property type="match status" value="1"/>
</dbReference>
<dbReference type="Pfam" id="PF00032">
    <property type="entry name" value="Cytochrom_B_C"/>
    <property type="match status" value="1"/>
</dbReference>
<dbReference type="PIRSF" id="PIRSF000033">
    <property type="entry name" value="B6f_17K"/>
    <property type="match status" value="1"/>
</dbReference>
<dbReference type="SUPFAM" id="SSF81648">
    <property type="entry name" value="a domain/subunit of cytochrome bc1 complex (Ubiquinol-cytochrome c reductase)"/>
    <property type="match status" value="1"/>
</dbReference>
<dbReference type="PROSITE" id="PS51003">
    <property type="entry name" value="CYTB_CTER"/>
    <property type="match status" value="1"/>
</dbReference>
<reference key="1">
    <citation type="journal article" date="2003" name="Nature">
        <title>Genome divergence in two Prochlorococcus ecotypes reflects oceanic niche differentiation.</title>
        <authorList>
            <person name="Rocap G."/>
            <person name="Larimer F.W."/>
            <person name="Lamerdin J.E."/>
            <person name="Malfatti S."/>
            <person name="Chain P."/>
            <person name="Ahlgren N.A."/>
            <person name="Arellano A."/>
            <person name="Coleman M."/>
            <person name="Hauser L."/>
            <person name="Hess W.R."/>
            <person name="Johnson Z.I."/>
            <person name="Land M.L."/>
            <person name="Lindell D."/>
            <person name="Post A.F."/>
            <person name="Regala W."/>
            <person name="Shah M."/>
            <person name="Shaw S.L."/>
            <person name="Steglich C."/>
            <person name="Sullivan M.B."/>
            <person name="Ting C.S."/>
            <person name="Tolonen A."/>
            <person name="Webb E.A."/>
            <person name="Zinser E.R."/>
            <person name="Chisholm S.W."/>
        </authorList>
    </citation>
    <scope>NUCLEOTIDE SEQUENCE [LARGE SCALE GENOMIC DNA]</scope>
    <source>
        <strain>MIT 9313</strain>
    </source>
</reference>
<accession>Q7TUQ1</accession>
<evidence type="ECO:0000255" key="1">
    <source>
        <dbReference type="HAMAP-Rule" id="MF_01344"/>
    </source>
</evidence>
<proteinExistence type="inferred from homology"/>